<geneLocation type="chloroplast"/>
<feature type="chain" id="PRO_0000199778" description="Acetyl-coenzyme A carboxylase carboxyl transferase subunit beta, chloroplastic">
    <location>
        <begin position="1"/>
        <end position="314"/>
    </location>
</feature>
<feature type="domain" description="CoA carboxyltransferase N-terminal" evidence="3">
    <location>
        <begin position="47"/>
        <end position="314"/>
    </location>
</feature>
<feature type="zinc finger region" description="C4-type" evidence="2">
    <location>
        <begin position="51"/>
        <end position="73"/>
    </location>
</feature>
<feature type="binding site" evidence="2">
    <location>
        <position position="51"/>
    </location>
    <ligand>
        <name>Zn(2+)</name>
        <dbReference type="ChEBI" id="CHEBI:29105"/>
    </ligand>
</feature>
<feature type="binding site" evidence="2">
    <location>
        <position position="54"/>
    </location>
    <ligand>
        <name>Zn(2+)</name>
        <dbReference type="ChEBI" id="CHEBI:29105"/>
    </ligand>
</feature>
<feature type="binding site" evidence="2">
    <location>
        <position position="70"/>
    </location>
    <ligand>
        <name>Zn(2+)</name>
        <dbReference type="ChEBI" id="CHEBI:29105"/>
    </ligand>
</feature>
<feature type="binding site" evidence="2">
    <location>
        <position position="73"/>
    </location>
    <ligand>
        <name>Zn(2+)</name>
        <dbReference type="ChEBI" id="CHEBI:29105"/>
    </ligand>
</feature>
<proteinExistence type="inferred from homology"/>
<name>ACCD_ANGLY</name>
<evidence type="ECO:0000250" key="1"/>
<evidence type="ECO:0000255" key="2">
    <source>
        <dbReference type="HAMAP-Rule" id="MF_01395"/>
    </source>
</evidence>
<evidence type="ECO:0000255" key="3">
    <source>
        <dbReference type="PROSITE-ProRule" id="PRU01136"/>
    </source>
</evidence>
<dbReference type="EC" id="2.1.3.15" evidence="2"/>
<dbReference type="EMBL" id="X58429">
    <property type="protein sequence ID" value="CAA41333.1"/>
    <property type="molecule type" value="Genomic_DNA"/>
</dbReference>
<dbReference type="PIR" id="S19230">
    <property type="entry name" value="BWFNZT"/>
</dbReference>
<dbReference type="SMR" id="P28252"/>
<dbReference type="UniPathway" id="UPA00655">
    <property type="reaction ID" value="UER00711"/>
</dbReference>
<dbReference type="GO" id="GO:0009317">
    <property type="term" value="C:acetyl-CoA carboxylase complex"/>
    <property type="evidence" value="ECO:0007669"/>
    <property type="project" value="InterPro"/>
</dbReference>
<dbReference type="GO" id="GO:0009570">
    <property type="term" value="C:chloroplast stroma"/>
    <property type="evidence" value="ECO:0007669"/>
    <property type="project" value="UniProtKB-SubCell"/>
</dbReference>
<dbReference type="GO" id="GO:0003989">
    <property type="term" value="F:acetyl-CoA carboxylase activity"/>
    <property type="evidence" value="ECO:0007669"/>
    <property type="project" value="InterPro"/>
</dbReference>
<dbReference type="GO" id="GO:0005524">
    <property type="term" value="F:ATP binding"/>
    <property type="evidence" value="ECO:0007669"/>
    <property type="project" value="UniProtKB-KW"/>
</dbReference>
<dbReference type="GO" id="GO:0016743">
    <property type="term" value="F:carboxyl- or carbamoyltransferase activity"/>
    <property type="evidence" value="ECO:0007669"/>
    <property type="project" value="UniProtKB-UniRule"/>
</dbReference>
<dbReference type="GO" id="GO:0008270">
    <property type="term" value="F:zinc ion binding"/>
    <property type="evidence" value="ECO:0007669"/>
    <property type="project" value="UniProtKB-UniRule"/>
</dbReference>
<dbReference type="GO" id="GO:0006633">
    <property type="term" value="P:fatty acid biosynthetic process"/>
    <property type="evidence" value="ECO:0007669"/>
    <property type="project" value="UniProtKB-KW"/>
</dbReference>
<dbReference type="GO" id="GO:2001295">
    <property type="term" value="P:malonyl-CoA biosynthetic process"/>
    <property type="evidence" value="ECO:0007669"/>
    <property type="project" value="UniProtKB-UniRule"/>
</dbReference>
<dbReference type="Gene3D" id="3.90.226.10">
    <property type="entry name" value="2-enoyl-CoA Hydratase, Chain A, domain 1"/>
    <property type="match status" value="1"/>
</dbReference>
<dbReference type="HAMAP" id="MF_01395">
    <property type="entry name" value="AcetylCoA_CT_beta"/>
    <property type="match status" value="1"/>
</dbReference>
<dbReference type="InterPro" id="IPR034733">
    <property type="entry name" value="AcCoA_carboxyl_beta"/>
</dbReference>
<dbReference type="InterPro" id="IPR000438">
    <property type="entry name" value="Acetyl_CoA_COase_Trfase_b_su"/>
</dbReference>
<dbReference type="InterPro" id="IPR029045">
    <property type="entry name" value="ClpP/crotonase-like_dom_sf"/>
</dbReference>
<dbReference type="InterPro" id="IPR011762">
    <property type="entry name" value="COA_CT_N"/>
</dbReference>
<dbReference type="NCBIfam" id="TIGR00515">
    <property type="entry name" value="accD"/>
    <property type="match status" value="1"/>
</dbReference>
<dbReference type="PANTHER" id="PTHR42995">
    <property type="entry name" value="ACETYL-COENZYME A CARBOXYLASE CARBOXYL TRANSFERASE SUBUNIT BETA, CHLOROPLASTIC"/>
    <property type="match status" value="1"/>
</dbReference>
<dbReference type="PANTHER" id="PTHR42995:SF5">
    <property type="entry name" value="ACETYL-COENZYME A CARBOXYLASE CARBOXYL TRANSFERASE SUBUNIT BETA, CHLOROPLASTIC"/>
    <property type="match status" value="1"/>
</dbReference>
<dbReference type="Pfam" id="PF01039">
    <property type="entry name" value="Carboxyl_trans"/>
    <property type="match status" value="1"/>
</dbReference>
<dbReference type="PRINTS" id="PR01070">
    <property type="entry name" value="ACCCTRFRASEB"/>
</dbReference>
<dbReference type="SUPFAM" id="SSF52096">
    <property type="entry name" value="ClpP/crotonase"/>
    <property type="match status" value="1"/>
</dbReference>
<dbReference type="PROSITE" id="PS50980">
    <property type="entry name" value="COA_CT_NTER"/>
    <property type="match status" value="1"/>
</dbReference>
<comment type="function">
    <text evidence="2">Component of the acetyl coenzyme A carboxylase (ACC) complex. Biotin carboxylase (BC) catalyzes the carboxylation of biotin on its carrier protein (BCCP) and then the CO(2) group is transferred by the transcarboxylase to acetyl-CoA to form malonyl-CoA.</text>
</comment>
<comment type="catalytic activity">
    <reaction evidence="2">
        <text>N(6)-carboxybiotinyl-L-lysyl-[protein] + acetyl-CoA = N(6)-biotinyl-L-lysyl-[protein] + malonyl-CoA</text>
        <dbReference type="Rhea" id="RHEA:54728"/>
        <dbReference type="Rhea" id="RHEA-COMP:10505"/>
        <dbReference type="Rhea" id="RHEA-COMP:10506"/>
        <dbReference type="ChEBI" id="CHEBI:57288"/>
        <dbReference type="ChEBI" id="CHEBI:57384"/>
        <dbReference type="ChEBI" id="CHEBI:83144"/>
        <dbReference type="ChEBI" id="CHEBI:83145"/>
        <dbReference type="EC" id="2.1.3.15"/>
    </reaction>
</comment>
<comment type="cofactor">
    <cofactor evidence="2">
        <name>Zn(2+)</name>
        <dbReference type="ChEBI" id="CHEBI:29105"/>
    </cofactor>
    <text evidence="2">Binds 1 zinc ion per subunit.</text>
</comment>
<comment type="pathway">
    <text evidence="2">Lipid metabolism; malonyl-CoA biosynthesis; malonyl-CoA from acetyl-CoA: step 1/1.</text>
</comment>
<comment type="subunit">
    <text evidence="1">Acetyl-CoA carboxylase is a heterohexamer composed of biotin carboxyl carrier protein, biotin carboxylase and 2 subunits each of ACCase subunit alpha and ACCase plastid-coded subunit beta (accD).</text>
</comment>
<comment type="subcellular location">
    <subcellularLocation>
        <location evidence="2">Plastid</location>
        <location evidence="2">Chloroplast stroma</location>
    </subcellularLocation>
</comment>
<comment type="similarity">
    <text evidence="2">Belongs to the AccD/PCCB family.</text>
</comment>
<organism>
    <name type="scientific">Angiopteris lygodiifolia</name>
    <name type="common">Turnip fern</name>
    <dbReference type="NCBI Taxonomy" id="3267"/>
    <lineage>
        <taxon>Eukaryota</taxon>
        <taxon>Viridiplantae</taxon>
        <taxon>Streptophyta</taxon>
        <taxon>Embryophyta</taxon>
        <taxon>Tracheophyta</taxon>
        <taxon>Polypodiopsida</taxon>
        <taxon>Marattiidae</taxon>
        <taxon>Marattiales</taxon>
        <taxon>Marattiaceae</taxon>
        <taxon>Angiopteris</taxon>
    </lineage>
</organism>
<gene>
    <name evidence="2" type="primary">accD</name>
    <name type="synonym">dedB</name>
    <name type="synonym">ycf11</name>
    <name type="synonym">zfpA</name>
</gene>
<keyword id="KW-0067">ATP-binding</keyword>
<keyword id="KW-0150">Chloroplast</keyword>
<keyword id="KW-0275">Fatty acid biosynthesis</keyword>
<keyword id="KW-0276">Fatty acid metabolism</keyword>
<keyword id="KW-0444">Lipid biosynthesis</keyword>
<keyword id="KW-0443">Lipid metabolism</keyword>
<keyword id="KW-0479">Metal-binding</keyword>
<keyword id="KW-0547">Nucleotide-binding</keyword>
<keyword id="KW-0934">Plastid</keyword>
<keyword id="KW-0808">Transferase</keyword>
<keyword id="KW-0862">Zinc</keyword>
<keyword id="KW-0863">Zinc-finger</keyword>
<reference key="1">
    <citation type="journal article" date="1992" name="Plant Mol. Biol.">
        <title>Nucleotide sequence of atpB, rbcL, trnR, dedB and psaI chloroplast genes from a fern Angiopteris lygodiifolia: a possible emergence of Spermatophyta lineage before the separation of Bryophyta and Pteridophyta.</title>
        <authorList>
            <person name="Yoshinaga K."/>
            <person name="Kubota Y."/>
            <person name="Ishii T."/>
            <person name="Wada K."/>
        </authorList>
    </citation>
    <scope>NUCLEOTIDE SEQUENCE [GENOMIC DNA]</scope>
    <source>
        <strain>Rosenstock</strain>
    </source>
</reference>
<accession>P28252</accession>
<sequence>MSLINWFEEKRKFGGLIGAFIEKATKGYVLSEREKDRYINVDTNKGLWTRCDNCENMLYIKFLKQNKGVCEECGYHLQINSTERIELLIDRDTWIPMDEDMVAQDVLKFSDEDSYRNRISLSQKRTGLTDAVQTGIGNLNGTPVALGVMDFQSMGGSMGSVVGEKITRLIEYATQESLPLIIVCASGGARMQEGTLSSMQMAKISSVSQIHQVQKKLLYIAVLTYPTTGGVTASFGMLGDIIIAEPKAYIAFAGKRVIEQTLRQKIPDGFQVAESLFDHGLLDSIVPRNLLKGVLSEIFELYDLAPWKEKNNQV</sequence>
<protein>
    <recommendedName>
        <fullName evidence="2">Acetyl-coenzyme A carboxylase carboxyl transferase subunit beta, chloroplastic</fullName>
        <shortName evidence="2">ACCase subunit beta</shortName>
        <shortName evidence="2">Acetyl-CoA carboxylase carboxyltransferase subunit beta</shortName>
        <ecNumber evidence="2">2.1.3.15</ecNumber>
    </recommendedName>
</protein>